<proteinExistence type="evidence at protein level"/>
<organism>
    <name type="scientific">Gallus gallus</name>
    <name type="common">Chicken</name>
    <dbReference type="NCBI Taxonomy" id="9031"/>
    <lineage>
        <taxon>Eukaryota</taxon>
        <taxon>Metazoa</taxon>
        <taxon>Chordata</taxon>
        <taxon>Craniata</taxon>
        <taxon>Vertebrata</taxon>
        <taxon>Euteleostomi</taxon>
        <taxon>Archelosauria</taxon>
        <taxon>Archosauria</taxon>
        <taxon>Dinosauria</taxon>
        <taxon>Saurischia</taxon>
        <taxon>Theropoda</taxon>
        <taxon>Coelurosauria</taxon>
        <taxon>Aves</taxon>
        <taxon>Neognathae</taxon>
        <taxon>Galloanserae</taxon>
        <taxon>Galliformes</taxon>
        <taxon>Phasianidae</taxon>
        <taxon>Phasianinae</taxon>
        <taxon>Gallus</taxon>
    </lineage>
</organism>
<protein>
    <recommendedName>
        <fullName>Cellular tumor antigen p53</fullName>
    </recommendedName>
    <alternativeName>
        <fullName>Tumor suppressor p53</fullName>
    </alternativeName>
</protein>
<sequence length="367" mass="40169">MAEEMEPLLEPTEVFMDLWSMLPYSMQQLPLPEDHSNWQELSPLEPSDPPPPPPPPPLPLAAAAPPPLNPPTPPRAAPSPVVPSTEDYGGDFDFRVGFVEAGTAKSVTCTYSPVLNKVYCRLAKPCPVQVRVGVAPPPGSSLRAVAVYKKSEHVAEVVRRCPHHERCGGGTDGLAPAQHLIRVEGNPQARYHDDETTKRHSVVVPYEPPEVGSDCTTVLYNFMCNSSCMGGMNRRPILTILTLEGPGGQLLGRRCFEVRVCACPGRDRKIEEENFRKRGGAGGVAKRAMSPPTEAPEPPKKRVLNPDNEIFYLQVRGRRRYEMLKEINEALQLAEGGSAPRPSKGRRVKVEGPQPSCGKKLLQKGSD</sequence>
<reference key="1">
    <citation type="journal article" date="1988" name="Nucleic Acids Res.">
        <title>Nucleotide sequence of a cDNA encoding the chicken p53 nuclear oncoprotein.</title>
        <authorList>
            <person name="Soussi T."/>
        </authorList>
    </citation>
    <scope>NUCLEOTIDE SEQUENCE [MRNA]</scope>
    <source>
        <strain>SPAFAS</strain>
    </source>
</reference>
<evidence type="ECO:0000250" key="1"/>
<evidence type="ECO:0000250" key="2">
    <source>
        <dbReference type="UniProtKB" id="P04637"/>
    </source>
</evidence>
<evidence type="ECO:0000256" key="3">
    <source>
        <dbReference type="SAM" id="MobiDB-lite"/>
    </source>
</evidence>
<evidence type="ECO:0000305" key="4"/>
<keyword id="KW-0010">Activator</keyword>
<keyword id="KW-0053">Apoptosis</keyword>
<keyword id="KW-0131">Cell cycle</keyword>
<keyword id="KW-0963">Cytoplasm</keyword>
<keyword id="KW-0238">DNA-binding</keyword>
<keyword id="KW-0479">Metal-binding</keyword>
<keyword id="KW-0539">Nucleus</keyword>
<keyword id="KW-0597">Phosphoprotein</keyword>
<keyword id="KW-1185">Reference proteome</keyword>
<keyword id="KW-0804">Transcription</keyword>
<keyword id="KW-0805">Transcription regulation</keyword>
<keyword id="KW-0043">Tumor suppressor</keyword>
<keyword id="KW-0862">Zinc</keyword>
<accession>P10360</accession>
<comment type="function">
    <text evidence="1">Multifunctional transcription factor that induces cell cycle arrest, DNA repair or apoptosis upon binding to its target DNA sequence. Acts as a tumor suppressor in many tumor types; induces growth arrest or apoptosis depending on the physiological circumstances and cell type. Negatively regulates cell division by controlling expression of a set of genes required for this process. One of the activated genes is an inhibitor of cyclin-dependent kinases. Apoptosis induction seems to be mediated either by stimulation of BAX and FAS antigen expression, or by repression of Bcl-2 expression (By similarity).</text>
</comment>
<comment type="cofactor">
    <cofactor evidence="1">
        <name>Zn(2+)</name>
        <dbReference type="ChEBI" id="CHEBI:29105"/>
    </cofactor>
    <text evidence="1">Binds 1 zinc ion per subunit.</text>
</comment>
<comment type="subunit">
    <text evidence="1">Binds DNA as a homotetramer.</text>
</comment>
<comment type="interaction">
    <interactant intactId="EBI-10766704">
        <id>P10360</id>
    </interactant>
    <interactant intactId="EBI-10766689">
        <id>Q77Q71</id>
        <label>R-LORF7</label>
    </interactant>
    <organismsDiffer>true</organismsDiffer>
    <experiments>3</experiments>
</comment>
<comment type="subcellular location">
    <subcellularLocation>
        <location evidence="1">Cytoplasm</location>
    </subcellularLocation>
    <subcellularLocation>
        <location evidence="1">Nucleus</location>
    </subcellularLocation>
</comment>
<comment type="domain">
    <text evidence="2">The N-terminal and C-terminal disordered regions undergo liquid-liquid phase separation (LLPS) following homotetramerization and activation. Post-translational modifications, such as phosphorylation or lactylation affect the ability to undergo LLPS.</text>
</comment>
<comment type="domain">
    <text evidence="2">The nuclear export signal acts as a transcriptional repression domain. The TADI and TADII motifs (residues 17 to 25 and 48 to 56) correspond both to 9aaTAD motifs which are transactivation domains present in a large number of yeast and animal transcription factors.</text>
</comment>
<comment type="similarity">
    <text evidence="4">Belongs to the p53 family.</text>
</comment>
<dbReference type="EMBL" id="X13057">
    <property type="protein sequence ID" value="CAA31456.1"/>
    <property type="molecule type" value="mRNA"/>
</dbReference>
<dbReference type="PIR" id="S02193">
    <property type="entry name" value="S02193"/>
</dbReference>
<dbReference type="RefSeq" id="NP_990595.1">
    <property type="nucleotide sequence ID" value="NM_205264.1"/>
</dbReference>
<dbReference type="SMR" id="P10360"/>
<dbReference type="BioGRID" id="676460">
    <property type="interactions" value="2"/>
</dbReference>
<dbReference type="FunCoup" id="P10360">
    <property type="interactions" value="1208"/>
</dbReference>
<dbReference type="IntAct" id="P10360">
    <property type="interactions" value="1"/>
</dbReference>
<dbReference type="GeneID" id="396200"/>
<dbReference type="CTD" id="7157"/>
<dbReference type="VEuPathDB" id="HostDB:geneid_396200"/>
<dbReference type="InParanoid" id="P10360"/>
<dbReference type="OMA" id="YMEDGNT"/>
<dbReference type="OrthoDB" id="5915660at2759"/>
<dbReference type="PhylomeDB" id="P10360"/>
<dbReference type="PRO" id="PR:P10360"/>
<dbReference type="Proteomes" id="UP000000539">
    <property type="component" value="Unassembled WGS sequence"/>
</dbReference>
<dbReference type="GO" id="GO:0005737">
    <property type="term" value="C:cytoplasm"/>
    <property type="evidence" value="ECO:0000250"/>
    <property type="project" value="UniProtKB"/>
</dbReference>
<dbReference type="GO" id="GO:0005739">
    <property type="term" value="C:mitochondrion"/>
    <property type="evidence" value="ECO:0000250"/>
    <property type="project" value="UniProtKB"/>
</dbReference>
<dbReference type="GO" id="GO:0005634">
    <property type="term" value="C:nucleus"/>
    <property type="evidence" value="ECO:0000314"/>
    <property type="project" value="AgBase"/>
</dbReference>
<dbReference type="GO" id="GO:0000981">
    <property type="term" value="F:DNA-binding transcription factor activity, RNA polymerase II-specific"/>
    <property type="evidence" value="ECO:0000318"/>
    <property type="project" value="GO_Central"/>
</dbReference>
<dbReference type="GO" id="GO:0046872">
    <property type="term" value="F:metal ion binding"/>
    <property type="evidence" value="ECO:0007669"/>
    <property type="project" value="UniProtKB-KW"/>
</dbReference>
<dbReference type="GO" id="GO:0140693">
    <property type="term" value="F:molecular condensate scaffold activity"/>
    <property type="evidence" value="ECO:0000250"/>
    <property type="project" value="UniProtKB"/>
</dbReference>
<dbReference type="GO" id="GO:1990841">
    <property type="term" value="F:promoter-specific chromatin binding"/>
    <property type="evidence" value="ECO:0000250"/>
    <property type="project" value="UniProtKB"/>
</dbReference>
<dbReference type="GO" id="GO:0000978">
    <property type="term" value="F:RNA polymerase II cis-regulatory region sequence-specific DNA binding"/>
    <property type="evidence" value="ECO:0000318"/>
    <property type="project" value="GO_Central"/>
</dbReference>
<dbReference type="GO" id="GO:0006915">
    <property type="term" value="P:apoptotic process"/>
    <property type="evidence" value="ECO:0007669"/>
    <property type="project" value="UniProtKB-KW"/>
</dbReference>
<dbReference type="GO" id="GO:0006974">
    <property type="term" value="P:DNA damage response"/>
    <property type="evidence" value="ECO:0000250"/>
    <property type="project" value="UniProtKB"/>
</dbReference>
<dbReference type="GO" id="GO:0043065">
    <property type="term" value="P:positive regulation of apoptotic process"/>
    <property type="evidence" value="ECO:0000315"/>
    <property type="project" value="AgBase"/>
</dbReference>
<dbReference type="GO" id="GO:0045944">
    <property type="term" value="P:positive regulation of transcription by RNA polymerase II"/>
    <property type="evidence" value="ECO:0000250"/>
    <property type="project" value="UniProtKB"/>
</dbReference>
<dbReference type="GO" id="GO:0051262">
    <property type="term" value="P:protein tetramerization"/>
    <property type="evidence" value="ECO:0007669"/>
    <property type="project" value="InterPro"/>
</dbReference>
<dbReference type="GO" id="GO:0006357">
    <property type="term" value="P:regulation of transcription by RNA polymerase II"/>
    <property type="evidence" value="ECO:0000318"/>
    <property type="project" value="GO_Central"/>
</dbReference>
<dbReference type="CDD" id="cd08367">
    <property type="entry name" value="P53"/>
    <property type="match status" value="1"/>
</dbReference>
<dbReference type="FunFam" id="2.60.40.720:FF:000003">
    <property type="entry name" value="Cellular tumor antigen p53"/>
    <property type="match status" value="1"/>
</dbReference>
<dbReference type="Gene3D" id="2.60.40.720">
    <property type="match status" value="1"/>
</dbReference>
<dbReference type="Gene3D" id="4.10.170.10">
    <property type="entry name" value="p53-like tetramerisation domain"/>
    <property type="match status" value="1"/>
</dbReference>
<dbReference type="InterPro" id="IPR008967">
    <property type="entry name" value="p53-like_TF_DNA-bd_sf"/>
</dbReference>
<dbReference type="InterPro" id="IPR012346">
    <property type="entry name" value="p53/RUNT-type_TF_DNA-bd_sf"/>
</dbReference>
<dbReference type="InterPro" id="IPR011615">
    <property type="entry name" value="p53_DNA-bd"/>
</dbReference>
<dbReference type="InterPro" id="IPR036674">
    <property type="entry name" value="p53_tetramer_sf"/>
</dbReference>
<dbReference type="InterPro" id="IPR010991">
    <property type="entry name" value="p53_tetrameristn"/>
</dbReference>
<dbReference type="InterPro" id="IPR002117">
    <property type="entry name" value="p53_tumour_suppressor"/>
</dbReference>
<dbReference type="PANTHER" id="PTHR11447">
    <property type="entry name" value="CELLULAR TUMOR ANTIGEN P53"/>
    <property type="match status" value="1"/>
</dbReference>
<dbReference type="PANTHER" id="PTHR11447:SF6">
    <property type="entry name" value="CELLULAR TUMOR ANTIGEN P53"/>
    <property type="match status" value="1"/>
</dbReference>
<dbReference type="Pfam" id="PF00870">
    <property type="entry name" value="P53"/>
    <property type="match status" value="1"/>
</dbReference>
<dbReference type="Pfam" id="PF07710">
    <property type="entry name" value="P53_tetramer"/>
    <property type="match status" value="1"/>
</dbReference>
<dbReference type="PRINTS" id="PR00386">
    <property type="entry name" value="P53SUPPRESSR"/>
</dbReference>
<dbReference type="SUPFAM" id="SSF47719">
    <property type="entry name" value="p53 tetramerization domain"/>
    <property type="match status" value="1"/>
</dbReference>
<dbReference type="SUPFAM" id="SSF49417">
    <property type="entry name" value="p53-like transcription factors"/>
    <property type="match status" value="1"/>
</dbReference>
<dbReference type="PROSITE" id="PS00348">
    <property type="entry name" value="P53"/>
    <property type="match status" value="1"/>
</dbReference>
<feature type="chain" id="PRO_0000185716" description="Cellular tumor antigen p53">
    <location>
        <begin position="1"/>
        <end position="367"/>
    </location>
</feature>
<feature type="DNA-binding region" evidence="1">
    <location>
        <begin position="87"/>
        <end position="278"/>
    </location>
</feature>
<feature type="region of interest" description="Transcription activation (acidic)">
    <location>
        <begin position="1"/>
        <end position="30"/>
    </location>
</feature>
<feature type="region of interest" description="Disordered" evidence="3">
    <location>
        <begin position="30"/>
        <end position="84"/>
    </location>
</feature>
<feature type="region of interest" description="Interaction with DNA" evidence="1">
    <location>
        <begin position="259"/>
        <end position="266"/>
    </location>
</feature>
<feature type="region of interest" description="Disordered" evidence="3">
    <location>
        <begin position="275"/>
        <end position="303"/>
    </location>
</feature>
<feature type="region of interest" description="Oligomerization">
    <location>
        <begin position="308"/>
        <end position="339"/>
    </location>
</feature>
<feature type="region of interest" description="Disordered" evidence="3">
    <location>
        <begin position="333"/>
        <end position="367"/>
    </location>
</feature>
<feature type="region of interest" description="Basic (repression of DNA-binding)">
    <location>
        <begin position="347"/>
        <end position="364"/>
    </location>
</feature>
<feature type="short sequence motif" description="Bipartite nuclear localization signal" evidence="1">
    <location>
        <begin position="286"/>
        <end position="302"/>
    </location>
</feature>
<feature type="short sequence motif" description="Nuclear export signal" evidence="1">
    <location>
        <begin position="322"/>
        <end position="333"/>
    </location>
</feature>
<feature type="compositionally biased region" description="Pro residues" evidence="3">
    <location>
        <begin position="46"/>
        <end position="81"/>
    </location>
</feature>
<feature type="binding site" evidence="1">
    <location>
        <position position="161"/>
    </location>
    <ligand>
        <name>Zn(2+)</name>
        <dbReference type="ChEBI" id="CHEBI:29105"/>
    </ligand>
</feature>
<feature type="binding site" evidence="1">
    <location>
        <position position="164"/>
    </location>
    <ligand>
        <name>Zn(2+)</name>
        <dbReference type="ChEBI" id="CHEBI:29105"/>
    </ligand>
</feature>
<feature type="binding site" evidence="1">
    <location>
        <position position="224"/>
    </location>
    <ligand>
        <name>Zn(2+)</name>
        <dbReference type="ChEBI" id="CHEBI:29105"/>
    </ligand>
</feature>
<feature type="binding site" evidence="1">
    <location>
        <position position="228"/>
    </location>
    <ligand>
        <name>Zn(2+)</name>
        <dbReference type="ChEBI" id="CHEBI:29105"/>
    </ligand>
</feature>
<feature type="site" description="Interaction with DNA" evidence="1">
    <location>
        <position position="105"/>
    </location>
</feature>
<gene>
    <name type="primary">TP53</name>
</gene>
<name>P53_CHICK</name>